<organism>
    <name type="scientific">Streptococcus sanguinis (strain SK36)</name>
    <dbReference type="NCBI Taxonomy" id="388919"/>
    <lineage>
        <taxon>Bacteria</taxon>
        <taxon>Bacillati</taxon>
        <taxon>Bacillota</taxon>
        <taxon>Bacilli</taxon>
        <taxon>Lactobacillales</taxon>
        <taxon>Streptococcaceae</taxon>
        <taxon>Streptococcus</taxon>
    </lineage>
</organism>
<accession>A3CLF9</accession>
<keyword id="KW-0067">ATP-binding</keyword>
<keyword id="KW-0436">Ligase</keyword>
<keyword id="KW-0547">Nucleotide-binding</keyword>
<keyword id="KW-0648">Protein biosynthesis</keyword>
<keyword id="KW-1185">Reference proteome</keyword>
<dbReference type="EC" id="6.3.5.-" evidence="1"/>
<dbReference type="EMBL" id="CP000387">
    <property type="protein sequence ID" value="ABN44014.1"/>
    <property type="molecule type" value="Genomic_DNA"/>
</dbReference>
<dbReference type="RefSeq" id="WP_002901040.1">
    <property type="nucleotide sequence ID" value="NC_009009.1"/>
</dbReference>
<dbReference type="RefSeq" id="YP_001034564.1">
    <property type="nucleotide sequence ID" value="NC_009009.1"/>
</dbReference>
<dbReference type="SMR" id="A3CLF9"/>
<dbReference type="STRING" id="388919.SSA_0571"/>
<dbReference type="GeneID" id="48424999"/>
<dbReference type="KEGG" id="ssa:SSA_0571"/>
<dbReference type="PATRIC" id="fig|388919.9.peg.550"/>
<dbReference type="eggNOG" id="COG0064">
    <property type="taxonomic scope" value="Bacteria"/>
</dbReference>
<dbReference type="HOGENOM" id="CLU_019240_0_0_9"/>
<dbReference type="OrthoDB" id="9804078at2"/>
<dbReference type="Proteomes" id="UP000002148">
    <property type="component" value="Chromosome"/>
</dbReference>
<dbReference type="GO" id="GO:0050566">
    <property type="term" value="F:asparaginyl-tRNA synthase (glutamine-hydrolyzing) activity"/>
    <property type="evidence" value="ECO:0007669"/>
    <property type="project" value="RHEA"/>
</dbReference>
<dbReference type="GO" id="GO:0005524">
    <property type="term" value="F:ATP binding"/>
    <property type="evidence" value="ECO:0007669"/>
    <property type="project" value="UniProtKB-KW"/>
</dbReference>
<dbReference type="GO" id="GO:0050567">
    <property type="term" value="F:glutaminyl-tRNA synthase (glutamine-hydrolyzing) activity"/>
    <property type="evidence" value="ECO:0007669"/>
    <property type="project" value="UniProtKB-UniRule"/>
</dbReference>
<dbReference type="GO" id="GO:0070681">
    <property type="term" value="P:glutaminyl-tRNAGln biosynthesis via transamidation"/>
    <property type="evidence" value="ECO:0007669"/>
    <property type="project" value="TreeGrafter"/>
</dbReference>
<dbReference type="GO" id="GO:0006412">
    <property type="term" value="P:translation"/>
    <property type="evidence" value="ECO:0007669"/>
    <property type="project" value="UniProtKB-UniRule"/>
</dbReference>
<dbReference type="FunFam" id="1.10.10.410:FF:000001">
    <property type="entry name" value="Aspartyl/glutamyl-tRNA(Asn/Gln) amidotransferase subunit B"/>
    <property type="match status" value="1"/>
</dbReference>
<dbReference type="FunFam" id="1.10.150.380:FF:000001">
    <property type="entry name" value="Aspartyl/glutamyl-tRNA(Asn/Gln) amidotransferase subunit B"/>
    <property type="match status" value="1"/>
</dbReference>
<dbReference type="Gene3D" id="1.10.10.410">
    <property type="match status" value="1"/>
</dbReference>
<dbReference type="Gene3D" id="1.10.150.380">
    <property type="entry name" value="GatB domain, N-terminal subdomain"/>
    <property type="match status" value="1"/>
</dbReference>
<dbReference type="HAMAP" id="MF_00121">
    <property type="entry name" value="GatB"/>
    <property type="match status" value="1"/>
</dbReference>
<dbReference type="InterPro" id="IPR017959">
    <property type="entry name" value="Asn/Gln-tRNA_amidoTrfase_suB/E"/>
</dbReference>
<dbReference type="InterPro" id="IPR006075">
    <property type="entry name" value="Asn/Gln-tRNA_Trfase_suB/E_cat"/>
</dbReference>
<dbReference type="InterPro" id="IPR018027">
    <property type="entry name" value="Asn/Gln_amidotransferase"/>
</dbReference>
<dbReference type="InterPro" id="IPR003789">
    <property type="entry name" value="Asn/Gln_tRNA_amidoTrase-B-like"/>
</dbReference>
<dbReference type="InterPro" id="IPR004413">
    <property type="entry name" value="GatB"/>
</dbReference>
<dbReference type="InterPro" id="IPR042114">
    <property type="entry name" value="GatB_C_1"/>
</dbReference>
<dbReference type="InterPro" id="IPR023168">
    <property type="entry name" value="GatB_Yqey_C_2"/>
</dbReference>
<dbReference type="InterPro" id="IPR017958">
    <property type="entry name" value="Gln-tRNA_amidoTrfase_suB_CS"/>
</dbReference>
<dbReference type="InterPro" id="IPR014746">
    <property type="entry name" value="Gln_synth/guanido_kin_cat_dom"/>
</dbReference>
<dbReference type="NCBIfam" id="TIGR00133">
    <property type="entry name" value="gatB"/>
    <property type="match status" value="1"/>
</dbReference>
<dbReference type="NCBIfam" id="NF004011">
    <property type="entry name" value="PRK05477.1-1"/>
    <property type="match status" value="1"/>
</dbReference>
<dbReference type="NCBIfam" id="NF004012">
    <property type="entry name" value="PRK05477.1-2"/>
    <property type="match status" value="1"/>
</dbReference>
<dbReference type="NCBIfam" id="NF004014">
    <property type="entry name" value="PRK05477.1-4"/>
    <property type="match status" value="1"/>
</dbReference>
<dbReference type="PANTHER" id="PTHR11659">
    <property type="entry name" value="GLUTAMYL-TRNA GLN AMIDOTRANSFERASE SUBUNIT B MITOCHONDRIAL AND PROKARYOTIC PET112-RELATED"/>
    <property type="match status" value="1"/>
</dbReference>
<dbReference type="PANTHER" id="PTHR11659:SF0">
    <property type="entry name" value="GLUTAMYL-TRNA(GLN) AMIDOTRANSFERASE SUBUNIT B, MITOCHONDRIAL"/>
    <property type="match status" value="1"/>
</dbReference>
<dbReference type="Pfam" id="PF02934">
    <property type="entry name" value="GatB_N"/>
    <property type="match status" value="1"/>
</dbReference>
<dbReference type="Pfam" id="PF02637">
    <property type="entry name" value="GatB_Yqey"/>
    <property type="match status" value="1"/>
</dbReference>
<dbReference type="SMART" id="SM00845">
    <property type="entry name" value="GatB_Yqey"/>
    <property type="match status" value="1"/>
</dbReference>
<dbReference type="SUPFAM" id="SSF89095">
    <property type="entry name" value="GatB/YqeY motif"/>
    <property type="match status" value="1"/>
</dbReference>
<dbReference type="SUPFAM" id="SSF55931">
    <property type="entry name" value="Glutamine synthetase/guanido kinase"/>
    <property type="match status" value="1"/>
</dbReference>
<dbReference type="PROSITE" id="PS01234">
    <property type="entry name" value="GATB"/>
    <property type="match status" value="1"/>
</dbReference>
<feature type="chain" id="PRO_1000016050" description="Aspartyl/glutamyl-tRNA(Asn/Gln) amidotransferase subunit B">
    <location>
        <begin position="1"/>
        <end position="477"/>
    </location>
</feature>
<comment type="function">
    <text evidence="1">Allows the formation of correctly charged Asn-tRNA(Asn) or Gln-tRNA(Gln) through the transamidation of misacylated Asp-tRNA(Asn) or Glu-tRNA(Gln) in organisms which lack either or both of asparaginyl-tRNA or glutaminyl-tRNA synthetases. The reaction takes place in the presence of glutamine and ATP through an activated phospho-Asp-tRNA(Asn) or phospho-Glu-tRNA(Gln).</text>
</comment>
<comment type="catalytic activity">
    <reaction evidence="1">
        <text>L-glutamyl-tRNA(Gln) + L-glutamine + ATP + H2O = L-glutaminyl-tRNA(Gln) + L-glutamate + ADP + phosphate + H(+)</text>
        <dbReference type="Rhea" id="RHEA:17521"/>
        <dbReference type="Rhea" id="RHEA-COMP:9681"/>
        <dbReference type="Rhea" id="RHEA-COMP:9684"/>
        <dbReference type="ChEBI" id="CHEBI:15377"/>
        <dbReference type="ChEBI" id="CHEBI:15378"/>
        <dbReference type="ChEBI" id="CHEBI:29985"/>
        <dbReference type="ChEBI" id="CHEBI:30616"/>
        <dbReference type="ChEBI" id="CHEBI:43474"/>
        <dbReference type="ChEBI" id="CHEBI:58359"/>
        <dbReference type="ChEBI" id="CHEBI:78520"/>
        <dbReference type="ChEBI" id="CHEBI:78521"/>
        <dbReference type="ChEBI" id="CHEBI:456216"/>
    </reaction>
</comment>
<comment type="catalytic activity">
    <reaction evidence="1">
        <text>L-aspartyl-tRNA(Asn) + L-glutamine + ATP + H2O = L-asparaginyl-tRNA(Asn) + L-glutamate + ADP + phosphate + 2 H(+)</text>
        <dbReference type="Rhea" id="RHEA:14513"/>
        <dbReference type="Rhea" id="RHEA-COMP:9674"/>
        <dbReference type="Rhea" id="RHEA-COMP:9677"/>
        <dbReference type="ChEBI" id="CHEBI:15377"/>
        <dbReference type="ChEBI" id="CHEBI:15378"/>
        <dbReference type="ChEBI" id="CHEBI:29985"/>
        <dbReference type="ChEBI" id="CHEBI:30616"/>
        <dbReference type="ChEBI" id="CHEBI:43474"/>
        <dbReference type="ChEBI" id="CHEBI:58359"/>
        <dbReference type="ChEBI" id="CHEBI:78515"/>
        <dbReference type="ChEBI" id="CHEBI:78516"/>
        <dbReference type="ChEBI" id="CHEBI:456216"/>
    </reaction>
</comment>
<comment type="subunit">
    <text evidence="1">Heterotrimer of A, B and C subunits.</text>
</comment>
<comment type="similarity">
    <text evidence="1">Belongs to the GatB/GatE family. GatB subfamily.</text>
</comment>
<evidence type="ECO:0000255" key="1">
    <source>
        <dbReference type="HAMAP-Rule" id="MF_00121"/>
    </source>
</evidence>
<name>GATB_STRSV</name>
<gene>
    <name evidence="1" type="primary">gatB</name>
    <name type="ordered locus">SSA_0571</name>
</gene>
<protein>
    <recommendedName>
        <fullName evidence="1">Aspartyl/glutamyl-tRNA(Asn/Gln) amidotransferase subunit B</fullName>
        <shortName evidence="1">Asp/Glu-ADT subunit B</shortName>
        <ecNumber evidence="1">6.3.5.-</ecNumber>
    </recommendedName>
</protein>
<reference key="1">
    <citation type="journal article" date="2007" name="J. Bacteriol.">
        <title>Genome of the opportunistic pathogen Streptococcus sanguinis.</title>
        <authorList>
            <person name="Xu P."/>
            <person name="Alves J.M."/>
            <person name="Kitten T."/>
            <person name="Brown A."/>
            <person name="Chen Z."/>
            <person name="Ozaki L.S."/>
            <person name="Manque P."/>
            <person name="Ge X."/>
            <person name="Serrano M.G."/>
            <person name="Puiu D."/>
            <person name="Hendricks S."/>
            <person name="Wang Y."/>
            <person name="Chaplin M.D."/>
            <person name="Akan D."/>
            <person name="Paik S."/>
            <person name="Peterson D.L."/>
            <person name="Macrina F.L."/>
            <person name="Buck G.A."/>
        </authorList>
    </citation>
    <scope>NUCLEOTIDE SEQUENCE [LARGE SCALE GENOMIC DNA]</scope>
    <source>
        <strain>SK36</strain>
    </source>
</reference>
<proteinExistence type="inferred from homology"/>
<sequence>MNFETVIGLEVHVELKTNSKIFSPAPAHFGEDPNANTNIIDWSFPGVLPVMNKGVIDYGIKAALALNMDIHQKMHFDRKNYFYPDNPKAYQISQFDEPIGYNGWIEIELEDGTTKKIRIERAHLEEDAGKNTHGSDGYSYVDLNRQGVPLIEIVSEADMRSPEEAYAYLTALKEIIQYTGISDVKMEEGSMRVDANISIRPYGQEEFGTKTELKNLNSFNFVRKGLAFEEKRQAEILRSGGQIRQETRRYDEATGETLLMRVKEGSADYRYFPEPDLPIFEIEDAWIEQVRSSLPAFPKERRAKYVGDYGLSDYDAKQLTATKAVSDFFEAALAAGGDAKAVSNWLQGEVAQYLNAEGKTISEIELTPENLTEMIALIADGTISSKIAKKVFVHLAKNGGSAKEYVQKAGLIQISDPAQLLPIIQEVFANNEKAINDYKGGNKNAAKSLIGQLMKATKGQANPQVAQKLLNEELEKL</sequence>